<feature type="chain" id="PRO_1000128058" description="Small ribosomal subunit protein uS19">
    <location>
        <begin position="1"/>
        <end position="89"/>
    </location>
</feature>
<sequence length="89" mass="9782">MARSLKKGPFVDHHLAKKVESAAGSKKPIKTWSRRSMILPEMVGITIAVHNGKNHIPVLVNENMVGHKLGEFAVTRTFKGHGGDKKSSR</sequence>
<proteinExistence type="inferred from homology"/>
<evidence type="ECO:0000255" key="1">
    <source>
        <dbReference type="HAMAP-Rule" id="MF_00531"/>
    </source>
</evidence>
<evidence type="ECO:0000305" key="2"/>
<organism>
    <name type="scientific">Xanthomonas campestris pv. campestris (strain B100)</name>
    <dbReference type="NCBI Taxonomy" id="509169"/>
    <lineage>
        <taxon>Bacteria</taxon>
        <taxon>Pseudomonadati</taxon>
        <taxon>Pseudomonadota</taxon>
        <taxon>Gammaproteobacteria</taxon>
        <taxon>Lysobacterales</taxon>
        <taxon>Lysobacteraceae</taxon>
        <taxon>Xanthomonas</taxon>
    </lineage>
</organism>
<comment type="function">
    <text evidence="1">Protein S19 forms a complex with S13 that binds strongly to the 16S ribosomal RNA.</text>
</comment>
<comment type="similarity">
    <text evidence="1">Belongs to the universal ribosomal protein uS19 family.</text>
</comment>
<reference key="1">
    <citation type="journal article" date="2008" name="J. Biotechnol.">
        <title>The genome of Xanthomonas campestris pv. campestris B100 and its use for the reconstruction of metabolic pathways involved in xanthan biosynthesis.</title>
        <authorList>
            <person name="Vorhoelter F.-J."/>
            <person name="Schneiker S."/>
            <person name="Goesmann A."/>
            <person name="Krause L."/>
            <person name="Bekel T."/>
            <person name="Kaiser O."/>
            <person name="Linke B."/>
            <person name="Patschkowski T."/>
            <person name="Rueckert C."/>
            <person name="Schmid J."/>
            <person name="Sidhu V.K."/>
            <person name="Sieber V."/>
            <person name="Tauch A."/>
            <person name="Watt S.A."/>
            <person name="Weisshaar B."/>
            <person name="Becker A."/>
            <person name="Niehaus K."/>
            <person name="Puehler A."/>
        </authorList>
    </citation>
    <scope>NUCLEOTIDE SEQUENCE [LARGE SCALE GENOMIC DNA]</scope>
    <source>
        <strain>B100</strain>
    </source>
</reference>
<name>RS19_XANCB</name>
<protein>
    <recommendedName>
        <fullName evidence="1">Small ribosomal subunit protein uS19</fullName>
    </recommendedName>
    <alternativeName>
        <fullName evidence="2">30S ribosomal protein S19</fullName>
    </alternativeName>
</protein>
<dbReference type="EMBL" id="AM920689">
    <property type="protein sequence ID" value="CAP52820.1"/>
    <property type="molecule type" value="Genomic_DNA"/>
</dbReference>
<dbReference type="SMR" id="B0RU78"/>
<dbReference type="KEGG" id="xca:xcc-b100_3455"/>
<dbReference type="HOGENOM" id="CLU_144911_0_1_6"/>
<dbReference type="Proteomes" id="UP000001188">
    <property type="component" value="Chromosome"/>
</dbReference>
<dbReference type="GO" id="GO:0005737">
    <property type="term" value="C:cytoplasm"/>
    <property type="evidence" value="ECO:0007669"/>
    <property type="project" value="UniProtKB-ARBA"/>
</dbReference>
<dbReference type="GO" id="GO:0015935">
    <property type="term" value="C:small ribosomal subunit"/>
    <property type="evidence" value="ECO:0007669"/>
    <property type="project" value="InterPro"/>
</dbReference>
<dbReference type="GO" id="GO:0019843">
    <property type="term" value="F:rRNA binding"/>
    <property type="evidence" value="ECO:0007669"/>
    <property type="project" value="UniProtKB-UniRule"/>
</dbReference>
<dbReference type="GO" id="GO:0003735">
    <property type="term" value="F:structural constituent of ribosome"/>
    <property type="evidence" value="ECO:0007669"/>
    <property type="project" value="InterPro"/>
</dbReference>
<dbReference type="GO" id="GO:0000028">
    <property type="term" value="P:ribosomal small subunit assembly"/>
    <property type="evidence" value="ECO:0007669"/>
    <property type="project" value="TreeGrafter"/>
</dbReference>
<dbReference type="GO" id="GO:0006412">
    <property type="term" value="P:translation"/>
    <property type="evidence" value="ECO:0007669"/>
    <property type="project" value="UniProtKB-UniRule"/>
</dbReference>
<dbReference type="FunFam" id="3.30.860.10:FF:000001">
    <property type="entry name" value="30S ribosomal protein S19"/>
    <property type="match status" value="1"/>
</dbReference>
<dbReference type="Gene3D" id="3.30.860.10">
    <property type="entry name" value="30s Ribosomal Protein S19, Chain A"/>
    <property type="match status" value="1"/>
</dbReference>
<dbReference type="HAMAP" id="MF_00531">
    <property type="entry name" value="Ribosomal_uS19"/>
    <property type="match status" value="1"/>
</dbReference>
<dbReference type="InterPro" id="IPR002222">
    <property type="entry name" value="Ribosomal_uS19"/>
</dbReference>
<dbReference type="InterPro" id="IPR005732">
    <property type="entry name" value="Ribosomal_uS19_bac-type"/>
</dbReference>
<dbReference type="InterPro" id="IPR020934">
    <property type="entry name" value="Ribosomal_uS19_CS"/>
</dbReference>
<dbReference type="InterPro" id="IPR023575">
    <property type="entry name" value="Ribosomal_uS19_SF"/>
</dbReference>
<dbReference type="NCBIfam" id="TIGR01050">
    <property type="entry name" value="rpsS_bact"/>
    <property type="match status" value="1"/>
</dbReference>
<dbReference type="PANTHER" id="PTHR11880">
    <property type="entry name" value="RIBOSOMAL PROTEIN S19P FAMILY MEMBER"/>
    <property type="match status" value="1"/>
</dbReference>
<dbReference type="PANTHER" id="PTHR11880:SF8">
    <property type="entry name" value="SMALL RIBOSOMAL SUBUNIT PROTEIN US19M"/>
    <property type="match status" value="1"/>
</dbReference>
<dbReference type="Pfam" id="PF00203">
    <property type="entry name" value="Ribosomal_S19"/>
    <property type="match status" value="1"/>
</dbReference>
<dbReference type="PIRSF" id="PIRSF002144">
    <property type="entry name" value="Ribosomal_S19"/>
    <property type="match status" value="1"/>
</dbReference>
<dbReference type="PRINTS" id="PR00975">
    <property type="entry name" value="RIBOSOMALS19"/>
</dbReference>
<dbReference type="SUPFAM" id="SSF54570">
    <property type="entry name" value="Ribosomal protein S19"/>
    <property type="match status" value="1"/>
</dbReference>
<dbReference type="PROSITE" id="PS00323">
    <property type="entry name" value="RIBOSOMAL_S19"/>
    <property type="match status" value="1"/>
</dbReference>
<gene>
    <name evidence="1" type="primary">rpsS</name>
    <name type="ordered locus">xcc-b100_3455</name>
</gene>
<keyword id="KW-0687">Ribonucleoprotein</keyword>
<keyword id="KW-0689">Ribosomal protein</keyword>
<keyword id="KW-0694">RNA-binding</keyword>
<keyword id="KW-0699">rRNA-binding</keyword>
<accession>B0RU78</accession>